<reference key="1">
    <citation type="journal article" date="2014" name="Stand. Genomic Sci.">
        <title>Complete genome sequence of Anabaena variabilis ATCC 29413.</title>
        <authorList>
            <person name="Thiel T."/>
            <person name="Pratte B.S."/>
            <person name="Zhong J."/>
            <person name="Goodwin L."/>
            <person name="Copeland A."/>
            <person name="Lucas S."/>
            <person name="Han C."/>
            <person name="Pitluck S."/>
            <person name="Land M.L."/>
            <person name="Kyrpides N.C."/>
            <person name="Woyke T."/>
        </authorList>
    </citation>
    <scope>NUCLEOTIDE SEQUENCE [LARGE SCALE GENOMIC DNA]</scope>
    <source>
        <strain>ATCC 29413 / PCC 7937</strain>
    </source>
</reference>
<accession>Q3M725</accession>
<proteinExistence type="inferred from homology"/>
<protein>
    <recommendedName>
        <fullName evidence="1">Trigger factor</fullName>
        <shortName evidence="1">TF</shortName>
        <ecNumber evidence="1">5.2.1.8</ecNumber>
    </recommendedName>
    <alternativeName>
        <fullName evidence="1">PPIase</fullName>
    </alternativeName>
</protein>
<comment type="function">
    <text evidence="1">Involved in protein export. Acts as a chaperone by maintaining the newly synthesized protein in an open conformation. Functions as a peptidyl-prolyl cis-trans isomerase.</text>
</comment>
<comment type="catalytic activity">
    <reaction evidence="1">
        <text>[protein]-peptidylproline (omega=180) = [protein]-peptidylproline (omega=0)</text>
        <dbReference type="Rhea" id="RHEA:16237"/>
        <dbReference type="Rhea" id="RHEA-COMP:10747"/>
        <dbReference type="Rhea" id="RHEA-COMP:10748"/>
        <dbReference type="ChEBI" id="CHEBI:83833"/>
        <dbReference type="ChEBI" id="CHEBI:83834"/>
        <dbReference type="EC" id="5.2.1.8"/>
    </reaction>
</comment>
<comment type="subcellular location">
    <subcellularLocation>
        <location>Cytoplasm</location>
    </subcellularLocation>
    <text evidence="1">About half TF is bound to the ribosome near the polypeptide exit tunnel while the other half is free in the cytoplasm.</text>
</comment>
<comment type="domain">
    <text evidence="1">Consists of 3 domains; the N-terminus binds the ribosome, the middle domain has PPIase activity, while the C-terminus has intrinsic chaperone activity on its own.</text>
</comment>
<comment type="similarity">
    <text evidence="1">Belongs to the FKBP-type PPIase family. Tig subfamily.</text>
</comment>
<keyword id="KW-0131">Cell cycle</keyword>
<keyword id="KW-0132">Cell division</keyword>
<keyword id="KW-0143">Chaperone</keyword>
<keyword id="KW-0963">Cytoplasm</keyword>
<keyword id="KW-0413">Isomerase</keyword>
<keyword id="KW-0697">Rotamase</keyword>
<dbReference type="EC" id="5.2.1.8" evidence="1"/>
<dbReference type="EMBL" id="CP000117">
    <property type="protein sequence ID" value="ABA23211.1"/>
    <property type="molecule type" value="Genomic_DNA"/>
</dbReference>
<dbReference type="SMR" id="Q3M725"/>
<dbReference type="STRING" id="240292.Ava_3605"/>
<dbReference type="KEGG" id="ava:Ava_3605"/>
<dbReference type="eggNOG" id="COG0544">
    <property type="taxonomic scope" value="Bacteria"/>
</dbReference>
<dbReference type="HOGENOM" id="CLU_033058_3_1_3"/>
<dbReference type="Proteomes" id="UP000002533">
    <property type="component" value="Chromosome"/>
</dbReference>
<dbReference type="GO" id="GO:0005737">
    <property type="term" value="C:cytoplasm"/>
    <property type="evidence" value="ECO:0007669"/>
    <property type="project" value="UniProtKB-SubCell"/>
</dbReference>
<dbReference type="GO" id="GO:0003755">
    <property type="term" value="F:peptidyl-prolyl cis-trans isomerase activity"/>
    <property type="evidence" value="ECO:0007669"/>
    <property type="project" value="UniProtKB-UniRule"/>
</dbReference>
<dbReference type="GO" id="GO:0044183">
    <property type="term" value="F:protein folding chaperone"/>
    <property type="evidence" value="ECO:0007669"/>
    <property type="project" value="TreeGrafter"/>
</dbReference>
<dbReference type="GO" id="GO:0043022">
    <property type="term" value="F:ribosome binding"/>
    <property type="evidence" value="ECO:0007669"/>
    <property type="project" value="TreeGrafter"/>
</dbReference>
<dbReference type="GO" id="GO:0051083">
    <property type="term" value="P:'de novo' cotranslational protein folding"/>
    <property type="evidence" value="ECO:0007669"/>
    <property type="project" value="TreeGrafter"/>
</dbReference>
<dbReference type="GO" id="GO:0051301">
    <property type="term" value="P:cell division"/>
    <property type="evidence" value="ECO:0007669"/>
    <property type="project" value="UniProtKB-KW"/>
</dbReference>
<dbReference type="GO" id="GO:0061077">
    <property type="term" value="P:chaperone-mediated protein folding"/>
    <property type="evidence" value="ECO:0007669"/>
    <property type="project" value="TreeGrafter"/>
</dbReference>
<dbReference type="GO" id="GO:0015031">
    <property type="term" value="P:protein transport"/>
    <property type="evidence" value="ECO:0007669"/>
    <property type="project" value="UniProtKB-UniRule"/>
</dbReference>
<dbReference type="GO" id="GO:0043335">
    <property type="term" value="P:protein unfolding"/>
    <property type="evidence" value="ECO:0007669"/>
    <property type="project" value="TreeGrafter"/>
</dbReference>
<dbReference type="FunFam" id="3.10.50.40:FF:000001">
    <property type="entry name" value="Trigger factor"/>
    <property type="match status" value="1"/>
</dbReference>
<dbReference type="FunFam" id="3.30.70.1050:FF:000004">
    <property type="entry name" value="Trigger factor"/>
    <property type="match status" value="1"/>
</dbReference>
<dbReference type="Gene3D" id="3.10.50.40">
    <property type="match status" value="1"/>
</dbReference>
<dbReference type="Gene3D" id="3.30.70.1050">
    <property type="entry name" value="Trigger factor ribosome-binding domain"/>
    <property type="match status" value="1"/>
</dbReference>
<dbReference type="Gene3D" id="1.10.3120.10">
    <property type="entry name" value="Trigger factor, C-terminal domain"/>
    <property type="match status" value="1"/>
</dbReference>
<dbReference type="HAMAP" id="MF_00303">
    <property type="entry name" value="Trigger_factor_Tig"/>
    <property type="match status" value="1"/>
</dbReference>
<dbReference type="InterPro" id="IPR046357">
    <property type="entry name" value="PPIase_dom_sf"/>
</dbReference>
<dbReference type="InterPro" id="IPR001179">
    <property type="entry name" value="PPIase_FKBP_dom"/>
</dbReference>
<dbReference type="InterPro" id="IPR005215">
    <property type="entry name" value="Trig_fac"/>
</dbReference>
<dbReference type="InterPro" id="IPR008880">
    <property type="entry name" value="Trigger_fac_C"/>
</dbReference>
<dbReference type="InterPro" id="IPR037041">
    <property type="entry name" value="Trigger_fac_C_sf"/>
</dbReference>
<dbReference type="InterPro" id="IPR008881">
    <property type="entry name" value="Trigger_fac_ribosome-bd_bac"/>
</dbReference>
<dbReference type="InterPro" id="IPR036611">
    <property type="entry name" value="Trigger_fac_ribosome-bd_sf"/>
</dbReference>
<dbReference type="InterPro" id="IPR027304">
    <property type="entry name" value="Trigger_fact/SurA_dom_sf"/>
</dbReference>
<dbReference type="NCBIfam" id="TIGR00115">
    <property type="entry name" value="tig"/>
    <property type="match status" value="1"/>
</dbReference>
<dbReference type="PANTHER" id="PTHR30560">
    <property type="entry name" value="TRIGGER FACTOR CHAPERONE AND PEPTIDYL-PROLYL CIS/TRANS ISOMERASE"/>
    <property type="match status" value="1"/>
</dbReference>
<dbReference type="PANTHER" id="PTHR30560:SF3">
    <property type="entry name" value="TRIGGER FACTOR-LIKE PROTEIN TIG, CHLOROPLASTIC"/>
    <property type="match status" value="1"/>
</dbReference>
<dbReference type="Pfam" id="PF00254">
    <property type="entry name" value="FKBP_C"/>
    <property type="match status" value="1"/>
</dbReference>
<dbReference type="Pfam" id="PF05698">
    <property type="entry name" value="Trigger_C"/>
    <property type="match status" value="1"/>
</dbReference>
<dbReference type="Pfam" id="PF05697">
    <property type="entry name" value="Trigger_N"/>
    <property type="match status" value="1"/>
</dbReference>
<dbReference type="PIRSF" id="PIRSF003095">
    <property type="entry name" value="Trigger_factor"/>
    <property type="match status" value="1"/>
</dbReference>
<dbReference type="SUPFAM" id="SSF54534">
    <property type="entry name" value="FKBP-like"/>
    <property type="match status" value="1"/>
</dbReference>
<dbReference type="SUPFAM" id="SSF109998">
    <property type="entry name" value="Triger factor/SurA peptide-binding domain-like"/>
    <property type="match status" value="1"/>
</dbReference>
<dbReference type="SUPFAM" id="SSF102735">
    <property type="entry name" value="Trigger factor ribosome-binding domain"/>
    <property type="match status" value="1"/>
</dbReference>
<feature type="chain" id="PRO_0000256526" description="Trigger factor">
    <location>
        <begin position="1"/>
        <end position="471"/>
    </location>
</feature>
<feature type="domain" description="PPIase FKBP-type" evidence="1">
    <location>
        <begin position="169"/>
        <end position="264"/>
    </location>
</feature>
<feature type="region of interest" description="Disordered" evidence="2">
    <location>
        <begin position="443"/>
        <end position="471"/>
    </location>
</feature>
<feature type="compositionally biased region" description="Low complexity" evidence="2">
    <location>
        <begin position="448"/>
        <end position="471"/>
    </location>
</feature>
<name>TIG_TRIV2</name>
<organism>
    <name type="scientific">Trichormus variabilis (strain ATCC 29413 / PCC 7937)</name>
    <name type="common">Anabaena variabilis</name>
    <dbReference type="NCBI Taxonomy" id="240292"/>
    <lineage>
        <taxon>Bacteria</taxon>
        <taxon>Bacillati</taxon>
        <taxon>Cyanobacteriota</taxon>
        <taxon>Cyanophyceae</taxon>
        <taxon>Nostocales</taxon>
        <taxon>Nostocaceae</taxon>
        <taxon>Trichormus</taxon>
    </lineage>
</organism>
<gene>
    <name evidence="1" type="primary">tig</name>
    <name type="ordered locus">Ava_3605</name>
</gene>
<sequence length="471" mass="52379">MKVTQEKLPASQIGLEIEITPEITQKTYEQVIKNLSRTVNIPGFRKGKVPRQVLLQRLGKTHIKAAALEELLQDGIEQAIKQESIAAIGQPRLRSSFDDLINSYEPGQPLTFTAAVDVEPEINLVQYTGLEAKAEEIKYDPARVDEVLEKERQELATLIPVEGRAAQIGDVAVVDFKGVIAKAEGDDENAEPEPIPGGDASDFQVELQEDKFIPGFVTGIVGMNPGDTKEVSAQFPDPYVNQELAGKPAIFTVTLKEIKEKELPELNDDFAQEVSDFDTLEALRASLAERYQKEAEDKTKNNQQEALLGELVKHIEVDLPETLIEKEVDAMLTQTAMRLSQQGLDVKKLFTQDIIPQLRERSRPEAVERLKRSLGLQEVAKRESIAVTPEEIQARVTELVQQYPDEDIDVERLHTIVENELLSEKIIDWLLANSTIELVPEGSLASQESEITAPETEAETIEVTAESTTGE</sequence>
<evidence type="ECO:0000255" key="1">
    <source>
        <dbReference type="HAMAP-Rule" id="MF_00303"/>
    </source>
</evidence>
<evidence type="ECO:0000256" key="2">
    <source>
        <dbReference type="SAM" id="MobiDB-lite"/>
    </source>
</evidence>